<name>NR1I3_CALUR</name>
<keyword id="KW-0010">Activator</keyword>
<keyword id="KW-0963">Cytoplasm</keyword>
<keyword id="KW-0206">Cytoskeleton</keyword>
<keyword id="KW-0238">DNA-binding</keyword>
<keyword id="KW-0479">Metal-binding</keyword>
<keyword id="KW-0539">Nucleus</keyword>
<keyword id="KW-0597">Phosphoprotein</keyword>
<keyword id="KW-0675">Receptor</keyword>
<keyword id="KW-1185">Reference proteome</keyword>
<keyword id="KW-0804">Transcription</keyword>
<keyword id="KW-0805">Transcription regulation</keyword>
<keyword id="KW-0862">Zinc</keyword>
<keyword id="KW-0863">Zinc-finger</keyword>
<dbReference type="EMBL" id="AB109554">
    <property type="protein sequence ID" value="BAD00039.1"/>
    <property type="molecule type" value="mRNA"/>
</dbReference>
<dbReference type="SMR" id="P62044"/>
<dbReference type="InParanoid" id="P62044"/>
<dbReference type="Proteomes" id="UP000286641">
    <property type="component" value="Unplaced"/>
</dbReference>
<dbReference type="GO" id="GO:0005737">
    <property type="term" value="C:cytoplasm"/>
    <property type="evidence" value="ECO:0000250"/>
    <property type="project" value="UniProtKB"/>
</dbReference>
<dbReference type="GO" id="GO:0005856">
    <property type="term" value="C:cytoskeleton"/>
    <property type="evidence" value="ECO:0007669"/>
    <property type="project" value="UniProtKB-SubCell"/>
</dbReference>
<dbReference type="GO" id="GO:0005634">
    <property type="term" value="C:nucleus"/>
    <property type="evidence" value="ECO:0000250"/>
    <property type="project" value="UniProtKB"/>
</dbReference>
<dbReference type="GO" id="GO:0004879">
    <property type="term" value="F:nuclear receptor activity"/>
    <property type="evidence" value="ECO:0007669"/>
    <property type="project" value="TreeGrafter"/>
</dbReference>
<dbReference type="GO" id="GO:0000978">
    <property type="term" value="F:RNA polymerase II cis-regulatory region sequence-specific DNA binding"/>
    <property type="evidence" value="ECO:0007669"/>
    <property type="project" value="TreeGrafter"/>
</dbReference>
<dbReference type="GO" id="GO:0008270">
    <property type="term" value="F:zinc ion binding"/>
    <property type="evidence" value="ECO:0007669"/>
    <property type="project" value="UniProtKB-KW"/>
</dbReference>
<dbReference type="GO" id="GO:0030154">
    <property type="term" value="P:cell differentiation"/>
    <property type="evidence" value="ECO:0007669"/>
    <property type="project" value="TreeGrafter"/>
</dbReference>
<dbReference type="GO" id="GO:0000122">
    <property type="term" value="P:negative regulation of transcription by RNA polymerase II"/>
    <property type="evidence" value="ECO:0007669"/>
    <property type="project" value="TreeGrafter"/>
</dbReference>
<dbReference type="GO" id="GO:0045944">
    <property type="term" value="P:positive regulation of transcription by RNA polymerase II"/>
    <property type="evidence" value="ECO:0007669"/>
    <property type="project" value="TreeGrafter"/>
</dbReference>
<dbReference type="CDD" id="cd07156">
    <property type="entry name" value="NR_DBD_VDR_like"/>
    <property type="match status" value="1"/>
</dbReference>
<dbReference type="FunFam" id="1.10.565.10:FF:000025">
    <property type="entry name" value="Nuclear receptor subfamily 1 group I member 3"/>
    <property type="match status" value="1"/>
</dbReference>
<dbReference type="FunFam" id="3.30.50.10:FF:000035">
    <property type="entry name" value="Nuclear receptor subfamily 1 group I member 3"/>
    <property type="match status" value="1"/>
</dbReference>
<dbReference type="Gene3D" id="3.30.50.10">
    <property type="entry name" value="Erythroid Transcription Factor GATA-1, subunit A"/>
    <property type="match status" value="1"/>
</dbReference>
<dbReference type="Gene3D" id="1.10.565.10">
    <property type="entry name" value="Retinoid X Receptor"/>
    <property type="match status" value="1"/>
</dbReference>
<dbReference type="InterPro" id="IPR035500">
    <property type="entry name" value="NHR-like_dom_sf"/>
</dbReference>
<dbReference type="InterPro" id="IPR000536">
    <property type="entry name" value="Nucl_hrmn_rcpt_lig-bd"/>
</dbReference>
<dbReference type="InterPro" id="IPR050234">
    <property type="entry name" value="Nuclear_hormone_rcpt_NR1"/>
</dbReference>
<dbReference type="InterPro" id="IPR001723">
    <property type="entry name" value="Nuclear_hrmn_rcpt"/>
</dbReference>
<dbReference type="InterPro" id="IPR001628">
    <property type="entry name" value="Znf_hrmn_rcpt"/>
</dbReference>
<dbReference type="InterPro" id="IPR013088">
    <property type="entry name" value="Znf_NHR/GATA"/>
</dbReference>
<dbReference type="PANTHER" id="PTHR24082">
    <property type="entry name" value="NUCLEAR HORMONE RECEPTOR"/>
    <property type="match status" value="1"/>
</dbReference>
<dbReference type="PANTHER" id="PTHR24082:SF231">
    <property type="entry name" value="NUCLEAR RECEPTOR SUBFAMILY 1 GROUP I MEMBER 3"/>
    <property type="match status" value="1"/>
</dbReference>
<dbReference type="Pfam" id="PF00104">
    <property type="entry name" value="Hormone_recep"/>
    <property type="match status" value="1"/>
</dbReference>
<dbReference type="Pfam" id="PF00105">
    <property type="entry name" value="zf-C4"/>
    <property type="match status" value="1"/>
</dbReference>
<dbReference type="PRINTS" id="PR00398">
    <property type="entry name" value="STRDHORMONER"/>
</dbReference>
<dbReference type="PRINTS" id="PR00047">
    <property type="entry name" value="STROIDFINGER"/>
</dbReference>
<dbReference type="SMART" id="SM00430">
    <property type="entry name" value="HOLI"/>
    <property type="match status" value="1"/>
</dbReference>
<dbReference type="SMART" id="SM00399">
    <property type="entry name" value="ZnF_C4"/>
    <property type="match status" value="1"/>
</dbReference>
<dbReference type="SUPFAM" id="SSF57716">
    <property type="entry name" value="Glucocorticoid receptor-like (DNA-binding domain)"/>
    <property type="match status" value="1"/>
</dbReference>
<dbReference type="SUPFAM" id="SSF48508">
    <property type="entry name" value="Nuclear receptor ligand-binding domain"/>
    <property type="match status" value="1"/>
</dbReference>
<dbReference type="PROSITE" id="PS51843">
    <property type="entry name" value="NR_LBD"/>
    <property type="match status" value="1"/>
</dbReference>
<dbReference type="PROSITE" id="PS00031">
    <property type="entry name" value="NUCLEAR_REC_DBD_1"/>
    <property type="match status" value="1"/>
</dbReference>
<dbReference type="PROSITE" id="PS51030">
    <property type="entry name" value="NUCLEAR_REC_DBD_2"/>
    <property type="match status" value="1"/>
</dbReference>
<organism>
    <name type="scientific">Callorhinus ursinus</name>
    <name type="common">Northern fur seal</name>
    <dbReference type="NCBI Taxonomy" id="34884"/>
    <lineage>
        <taxon>Eukaryota</taxon>
        <taxon>Metazoa</taxon>
        <taxon>Chordata</taxon>
        <taxon>Craniata</taxon>
        <taxon>Vertebrata</taxon>
        <taxon>Euteleostomi</taxon>
        <taxon>Mammalia</taxon>
        <taxon>Eutheria</taxon>
        <taxon>Laurasiatheria</taxon>
        <taxon>Carnivora</taxon>
        <taxon>Caniformia</taxon>
        <taxon>Pinnipedia</taxon>
        <taxon>Otariidae</taxon>
        <taxon>Callorhinus</taxon>
    </lineage>
</organism>
<accession>P62044</accession>
<proteinExistence type="evidence at transcript level"/>
<reference key="1">
    <citation type="journal article" date="2004" name="Mar. Environ. Res.">
        <title>Identification of constitutive androstane receptor cDNA in northern fur seal (Callorhinus ursinus).</title>
        <authorList>
            <person name="Sakai H."/>
            <person name="Iwata H."/>
            <person name="Kim E.Y."/>
            <person name="Tanabe S."/>
            <person name="Baba N."/>
        </authorList>
    </citation>
    <scope>NUCLEOTIDE SEQUENCE [MRNA]</scope>
</reference>
<sequence>MASGEDGPRSCMVCGDRATGYHFHALTCEGCKGFFRRTVSKNTGLTCPFAGNCKVNKAQRRHCPACRLQKCLDAGMKKEMILSAEALVQRRAKQAQRRAQWAPVQLSKGQQELVQTLLGAHARHVGTMFDQFVQFRPPAHLFIHHQRLPIPVPALPLLKHFAEVNTFMVQEVIKFTKDLPLFRSLPMEDQISLLKGAAVEICHIALNTTFCLQTRNFLCGPLCYALEDGVHVGFQEEFLELLFRFHATLRRLQLQEPEYVLMAAMALFSPDRPGVTRREEIDRLQEVTALTLQSYIKGQPPRPRDRFLYAKLLGLLAELRSIDNAYGYQIQHIQGLSAMMPLLQEICS</sequence>
<protein>
    <recommendedName>
        <fullName>Nuclear receptor subfamily 1 group I member 3</fullName>
    </recommendedName>
    <alternativeName>
        <fullName>Constitutive androstane receptor</fullName>
        <shortName>CAR</shortName>
    </alternativeName>
</protein>
<feature type="chain" id="PRO_0000053551" description="Nuclear receptor subfamily 1 group I member 3">
    <location>
        <begin position="1"/>
        <end position="348"/>
    </location>
</feature>
<feature type="domain" description="NR LBD" evidence="5">
    <location>
        <begin position="109"/>
        <end position="348"/>
    </location>
</feature>
<feature type="DNA-binding region" description="Nuclear receptor" evidence="4">
    <location>
        <begin position="8"/>
        <end position="83"/>
    </location>
</feature>
<feature type="zinc finger region" description="NR C4-type" evidence="4">
    <location>
        <begin position="11"/>
        <end position="31"/>
    </location>
</feature>
<feature type="zinc finger region" description="NR C4-type" evidence="4">
    <location>
        <begin position="47"/>
        <end position="71"/>
    </location>
</feature>
<feature type="modified residue" description="Phosphothreonine; by PKC" evidence="3">
    <location>
        <position position="38"/>
    </location>
</feature>
<gene>
    <name type="primary">NR1I3</name>
    <name type="synonym">CAR</name>
</gene>
<comment type="function">
    <text evidence="1">Binds and transactivates the retinoic acid response elements that control expression of the retinoic acid receptor beta 2 and alcohol dehydrogenase 3 genes. Transactivates both the phenobarbital responsive element module of the human CYP2B6 gene and the CYP3A4 xenobiotic response element (By similarity).</text>
</comment>
<comment type="subunit">
    <text evidence="2">Heterodimer of NR1I3 and RXR. Interacts with PSMC4. Interacts with ECT2. Directly interacts with DNAJC7; this complex may also include HSP90 (By similarity). Interacts with CRY1 (By similarity). Interacts with CRY2 in a ligand-dependent manner (By similarity).</text>
</comment>
<comment type="subcellular location">
    <subcellularLocation>
        <location evidence="4">Nucleus</location>
    </subcellularLocation>
    <subcellularLocation>
        <location evidence="1">Cytoplasm</location>
    </subcellularLocation>
    <subcellularLocation>
        <location evidence="1">Cytoplasm</location>
        <location evidence="1">Cytoskeleton</location>
    </subcellularLocation>
    <text evidence="1">Recruited to the cytoplasm by DNAJC7.</text>
</comment>
<comment type="domain">
    <text>Composed by a short N-terminal domain followed by the DNA binding, hinge, and ligand binding/dimerization domains.</text>
</comment>
<comment type="PTM">
    <text evidence="1">Phosphorylated at Thr-38 by PKC, dephosphorylation of Thr-38 is required for nuclear translocation and activation.</text>
</comment>
<comment type="similarity">
    <text evidence="6">Belongs to the nuclear hormone receptor family. NR1 subfamily.</text>
</comment>
<evidence type="ECO:0000250" key="1"/>
<evidence type="ECO:0000250" key="2">
    <source>
        <dbReference type="UniProtKB" id="O35627"/>
    </source>
</evidence>
<evidence type="ECO:0000250" key="3">
    <source>
        <dbReference type="UniProtKB" id="Q14994"/>
    </source>
</evidence>
<evidence type="ECO:0000255" key="4">
    <source>
        <dbReference type="PROSITE-ProRule" id="PRU00407"/>
    </source>
</evidence>
<evidence type="ECO:0000255" key="5">
    <source>
        <dbReference type="PROSITE-ProRule" id="PRU01189"/>
    </source>
</evidence>
<evidence type="ECO:0000305" key="6"/>